<comment type="function">
    <text evidence="1">Catalyzes the condensation of ATP and 5-phosphoribose 1-diphosphate to form N'-(5'-phosphoribosyl)-ATP (PR-ATP). Has a crucial role in the pathway because the rate of histidine biosynthesis seems to be controlled primarily by regulation of HisG enzymatic activity.</text>
</comment>
<comment type="catalytic activity">
    <reaction evidence="1">
        <text>1-(5-phospho-beta-D-ribosyl)-ATP + diphosphate = 5-phospho-alpha-D-ribose 1-diphosphate + ATP</text>
        <dbReference type="Rhea" id="RHEA:18473"/>
        <dbReference type="ChEBI" id="CHEBI:30616"/>
        <dbReference type="ChEBI" id="CHEBI:33019"/>
        <dbReference type="ChEBI" id="CHEBI:58017"/>
        <dbReference type="ChEBI" id="CHEBI:73183"/>
        <dbReference type="EC" id="2.4.2.17"/>
    </reaction>
</comment>
<comment type="pathway">
    <text evidence="1">Amino-acid biosynthesis; L-histidine biosynthesis; L-histidine from 5-phospho-alpha-D-ribose 1-diphosphate: step 1/9.</text>
</comment>
<comment type="subunit">
    <text evidence="1">Heteromultimer composed of HisG and HisZ subunits.</text>
</comment>
<comment type="subcellular location">
    <subcellularLocation>
        <location evidence="1">Cytoplasm</location>
    </subcellularLocation>
</comment>
<comment type="domain">
    <text>Lacks the C-terminal regulatory region which is replaced by HisZ.</text>
</comment>
<comment type="similarity">
    <text evidence="1">Belongs to the ATP phosphoribosyltransferase family. Short subfamily.</text>
</comment>
<keyword id="KW-0028">Amino-acid biosynthesis</keyword>
<keyword id="KW-0067">ATP-binding</keyword>
<keyword id="KW-0963">Cytoplasm</keyword>
<keyword id="KW-0328">Glycosyltransferase</keyword>
<keyword id="KW-0368">Histidine biosynthesis</keyword>
<keyword id="KW-0547">Nucleotide-binding</keyword>
<keyword id="KW-0808">Transferase</keyword>
<gene>
    <name evidence="1" type="primary">hisG</name>
    <name type="ordered locus">Pput_1004</name>
</gene>
<protein>
    <recommendedName>
        <fullName evidence="1">ATP phosphoribosyltransferase</fullName>
        <shortName evidence="1">ATP-PRT</shortName>
        <shortName evidence="1">ATP-PRTase</shortName>
        <ecNumber evidence="1">2.4.2.17</ecNumber>
    </recommendedName>
</protein>
<organism>
    <name type="scientific">Pseudomonas putida (strain ATCC 700007 / DSM 6899 / JCM 31910 / BCRC 17059 / LMG 24140 / F1)</name>
    <dbReference type="NCBI Taxonomy" id="351746"/>
    <lineage>
        <taxon>Bacteria</taxon>
        <taxon>Pseudomonadati</taxon>
        <taxon>Pseudomonadota</taxon>
        <taxon>Gammaproteobacteria</taxon>
        <taxon>Pseudomonadales</taxon>
        <taxon>Pseudomonadaceae</taxon>
        <taxon>Pseudomonas</taxon>
    </lineage>
</organism>
<proteinExistence type="inferred from homology"/>
<sequence length="211" mass="22996">MLTIALSKGRILDDTLPLLAEAGIVPTENPDKSRKLIIPTTQDDVRLLIVRATDVPTYVEHGAADLGVAGKDVLMEYGGQGLYEPLDLQIAQCKLMTAGVVGAAEPKGRLRVATKFVNVAKRYYAEQGRQVDIIKLYGSMELAPLINLADKIIDVVDTGNTLRANGLEPQELIATISSRLVVNKASMKMQHARIQSLIDTLRQAVESRHRG</sequence>
<name>HIS1_PSEP1</name>
<feature type="chain" id="PRO_1000063301" description="ATP phosphoribosyltransferase">
    <location>
        <begin position="1"/>
        <end position="211"/>
    </location>
</feature>
<accession>A5VZ55</accession>
<evidence type="ECO:0000255" key="1">
    <source>
        <dbReference type="HAMAP-Rule" id="MF_01018"/>
    </source>
</evidence>
<reference key="1">
    <citation type="submission" date="2007-05" db="EMBL/GenBank/DDBJ databases">
        <title>Complete sequence of Pseudomonas putida F1.</title>
        <authorList>
            <consortium name="US DOE Joint Genome Institute"/>
            <person name="Copeland A."/>
            <person name="Lucas S."/>
            <person name="Lapidus A."/>
            <person name="Barry K."/>
            <person name="Detter J.C."/>
            <person name="Glavina del Rio T."/>
            <person name="Hammon N."/>
            <person name="Israni S."/>
            <person name="Dalin E."/>
            <person name="Tice H."/>
            <person name="Pitluck S."/>
            <person name="Chain P."/>
            <person name="Malfatti S."/>
            <person name="Shin M."/>
            <person name="Vergez L."/>
            <person name="Schmutz J."/>
            <person name="Larimer F."/>
            <person name="Land M."/>
            <person name="Hauser L."/>
            <person name="Kyrpides N."/>
            <person name="Lykidis A."/>
            <person name="Parales R."/>
            <person name="Richardson P."/>
        </authorList>
    </citation>
    <scope>NUCLEOTIDE SEQUENCE [LARGE SCALE GENOMIC DNA]</scope>
    <source>
        <strain>ATCC 700007 / DSM 6899 / JCM 31910 / BCRC 17059 / LMG 24140 / F1</strain>
    </source>
</reference>
<dbReference type="EC" id="2.4.2.17" evidence="1"/>
<dbReference type="EMBL" id="CP000712">
    <property type="protein sequence ID" value="ABQ77165.1"/>
    <property type="molecule type" value="Genomic_DNA"/>
</dbReference>
<dbReference type="SMR" id="A5VZ55"/>
<dbReference type="KEGG" id="ppf:Pput_1004"/>
<dbReference type="eggNOG" id="COG0040">
    <property type="taxonomic scope" value="Bacteria"/>
</dbReference>
<dbReference type="HOGENOM" id="CLU_038115_2_0_6"/>
<dbReference type="UniPathway" id="UPA00031">
    <property type="reaction ID" value="UER00006"/>
</dbReference>
<dbReference type="GO" id="GO:0005737">
    <property type="term" value="C:cytoplasm"/>
    <property type="evidence" value="ECO:0007669"/>
    <property type="project" value="UniProtKB-SubCell"/>
</dbReference>
<dbReference type="GO" id="GO:0005524">
    <property type="term" value="F:ATP binding"/>
    <property type="evidence" value="ECO:0007669"/>
    <property type="project" value="UniProtKB-KW"/>
</dbReference>
<dbReference type="GO" id="GO:0003879">
    <property type="term" value="F:ATP phosphoribosyltransferase activity"/>
    <property type="evidence" value="ECO:0007669"/>
    <property type="project" value="UniProtKB-UniRule"/>
</dbReference>
<dbReference type="GO" id="GO:0000105">
    <property type="term" value="P:L-histidine biosynthetic process"/>
    <property type="evidence" value="ECO:0007669"/>
    <property type="project" value="UniProtKB-UniRule"/>
</dbReference>
<dbReference type="CDD" id="cd13595">
    <property type="entry name" value="PBP2_HisGs"/>
    <property type="match status" value="1"/>
</dbReference>
<dbReference type="FunFam" id="3.40.190.10:FF:000011">
    <property type="entry name" value="ATP phosphoribosyltransferase"/>
    <property type="match status" value="1"/>
</dbReference>
<dbReference type="FunFam" id="3.40.190.10:FF:000022">
    <property type="entry name" value="ATP phosphoribosyltransferase"/>
    <property type="match status" value="1"/>
</dbReference>
<dbReference type="Gene3D" id="3.40.190.10">
    <property type="entry name" value="Periplasmic binding protein-like II"/>
    <property type="match status" value="2"/>
</dbReference>
<dbReference type="HAMAP" id="MF_01018">
    <property type="entry name" value="HisG_Short"/>
    <property type="match status" value="1"/>
</dbReference>
<dbReference type="InterPro" id="IPR013820">
    <property type="entry name" value="ATP_PRibTrfase_cat"/>
</dbReference>
<dbReference type="InterPro" id="IPR018198">
    <property type="entry name" value="ATP_PRibTrfase_CS"/>
</dbReference>
<dbReference type="InterPro" id="IPR001348">
    <property type="entry name" value="ATP_PRibTrfase_HisG"/>
</dbReference>
<dbReference type="InterPro" id="IPR024893">
    <property type="entry name" value="ATP_PRibTrfase_HisG_short"/>
</dbReference>
<dbReference type="NCBIfam" id="TIGR00070">
    <property type="entry name" value="hisG"/>
    <property type="match status" value="1"/>
</dbReference>
<dbReference type="PANTHER" id="PTHR21403:SF8">
    <property type="entry name" value="ATP PHOSPHORIBOSYLTRANSFERASE"/>
    <property type="match status" value="1"/>
</dbReference>
<dbReference type="PANTHER" id="PTHR21403">
    <property type="entry name" value="ATP PHOSPHORIBOSYLTRANSFERASE ATP-PRTASE"/>
    <property type="match status" value="1"/>
</dbReference>
<dbReference type="Pfam" id="PF01634">
    <property type="entry name" value="HisG"/>
    <property type="match status" value="1"/>
</dbReference>
<dbReference type="SUPFAM" id="SSF53850">
    <property type="entry name" value="Periplasmic binding protein-like II"/>
    <property type="match status" value="1"/>
</dbReference>
<dbReference type="PROSITE" id="PS01316">
    <property type="entry name" value="ATP_P_PHORIBOSYLTR"/>
    <property type="match status" value="1"/>
</dbReference>